<comment type="similarity">
    <text evidence="1">Belongs to the eukaryotic ribosomal protein eS6 family.</text>
</comment>
<protein>
    <recommendedName>
        <fullName evidence="1">Small ribosomal subunit protein eS6</fullName>
    </recommendedName>
    <alternativeName>
        <fullName evidence="2">30S ribosomal protein S6e</fullName>
    </alternativeName>
</protein>
<dbReference type="EMBL" id="CP001463">
    <property type="protein sequence ID" value="ACS89782.1"/>
    <property type="molecule type" value="Genomic_DNA"/>
</dbReference>
<dbReference type="RefSeq" id="WP_015849002.1">
    <property type="nucleotide sequence ID" value="NC_012883.1"/>
</dbReference>
<dbReference type="SMR" id="C6A2D7"/>
<dbReference type="STRING" id="604354.TSIB_0719"/>
<dbReference type="GeneID" id="8095707"/>
<dbReference type="KEGG" id="tsi:TSIB_0719"/>
<dbReference type="eggNOG" id="arCOG01946">
    <property type="taxonomic scope" value="Archaea"/>
</dbReference>
<dbReference type="HOGENOM" id="CLU_109671_1_1_2"/>
<dbReference type="OrthoDB" id="7793at2157"/>
<dbReference type="Proteomes" id="UP000009079">
    <property type="component" value="Chromosome"/>
</dbReference>
<dbReference type="GO" id="GO:1990904">
    <property type="term" value="C:ribonucleoprotein complex"/>
    <property type="evidence" value="ECO:0007669"/>
    <property type="project" value="UniProtKB-KW"/>
</dbReference>
<dbReference type="GO" id="GO:0005840">
    <property type="term" value="C:ribosome"/>
    <property type="evidence" value="ECO:0007669"/>
    <property type="project" value="UniProtKB-KW"/>
</dbReference>
<dbReference type="GO" id="GO:0003735">
    <property type="term" value="F:structural constituent of ribosome"/>
    <property type="evidence" value="ECO:0007669"/>
    <property type="project" value="InterPro"/>
</dbReference>
<dbReference type="GO" id="GO:0006412">
    <property type="term" value="P:translation"/>
    <property type="evidence" value="ECO:0007669"/>
    <property type="project" value="UniProtKB-UniRule"/>
</dbReference>
<dbReference type="HAMAP" id="MF_00512">
    <property type="entry name" value="Ribosomal_eS6"/>
    <property type="match status" value="1"/>
</dbReference>
<dbReference type="InterPro" id="IPR001377">
    <property type="entry name" value="Ribosomal_eS6"/>
</dbReference>
<dbReference type="InterPro" id="IPR020924">
    <property type="entry name" value="Ribosomal_eS6_arc"/>
</dbReference>
<dbReference type="InterPro" id="IPR018282">
    <property type="entry name" value="Ribosomal_eS6_CS"/>
</dbReference>
<dbReference type="NCBIfam" id="NF003293">
    <property type="entry name" value="PRK04290.1-2"/>
    <property type="match status" value="1"/>
</dbReference>
<dbReference type="NCBIfam" id="NF003294">
    <property type="entry name" value="PRK04290.1-3"/>
    <property type="match status" value="1"/>
</dbReference>
<dbReference type="PANTHER" id="PTHR11502">
    <property type="entry name" value="40S RIBOSOMAL PROTEIN S6"/>
    <property type="match status" value="1"/>
</dbReference>
<dbReference type="Pfam" id="PF01092">
    <property type="entry name" value="Ribosomal_S6e"/>
    <property type="match status" value="1"/>
</dbReference>
<dbReference type="SMART" id="SM01405">
    <property type="entry name" value="Ribosomal_S6e"/>
    <property type="match status" value="1"/>
</dbReference>
<dbReference type="PROSITE" id="PS00578">
    <property type="entry name" value="RIBOSOMAL_S6E"/>
    <property type="match status" value="1"/>
</dbReference>
<sequence length="126" mass="13826">MATFKLVISDTKTGVAKQIEITGAEADKLIGLRIGDEIEAKELGFNLSEIFGSEIPGDVKLKITGGTDKDGFPMRPDVHGPRRVKILISRGPGFRPQERGERRKKTVRGNTISPEIAQINVKIVYP</sequence>
<organism>
    <name type="scientific">Thermococcus sibiricus (strain DSM 12597 / MM 739)</name>
    <dbReference type="NCBI Taxonomy" id="604354"/>
    <lineage>
        <taxon>Archaea</taxon>
        <taxon>Methanobacteriati</taxon>
        <taxon>Methanobacteriota</taxon>
        <taxon>Thermococci</taxon>
        <taxon>Thermococcales</taxon>
        <taxon>Thermococcaceae</taxon>
        <taxon>Thermococcus</taxon>
    </lineage>
</organism>
<gene>
    <name evidence="1" type="primary">rps6e</name>
    <name type="ordered locus">TSIB_0719</name>
</gene>
<name>RS6E_THESM</name>
<accession>C6A2D7</accession>
<feature type="chain" id="PRO_1000206627" description="Small ribosomal subunit protein eS6">
    <location>
        <begin position="1"/>
        <end position="126"/>
    </location>
</feature>
<evidence type="ECO:0000255" key="1">
    <source>
        <dbReference type="HAMAP-Rule" id="MF_00512"/>
    </source>
</evidence>
<evidence type="ECO:0000305" key="2"/>
<reference key="1">
    <citation type="journal article" date="2009" name="Appl. Environ. Microbiol.">
        <title>Metabolic versatility and indigenous origin of the archaeon Thermococcus sibiricus, isolated from a siberian oil reservoir, as revealed by genome analysis.</title>
        <authorList>
            <person name="Mardanov A.V."/>
            <person name="Ravin N.V."/>
            <person name="Svetlitchnyi V.A."/>
            <person name="Beletsky A.V."/>
            <person name="Miroshnichenko M.L."/>
            <person name="Bonch-Osmolovskaya E.A."/>
            <person name="Skryabin K.G."/>
        </authorList>
    </citation>
    <scope>NUCLEOTIDE SEQUENCE [LARGE SCALE GENOMIC DNA]</scope>
    <source>
        <strain>DSM 12597 / MM 739</strain>
    </source>
</reference>
<keyword id="KW-1185">Reference proteome</keyword>
<keyword id="KW-0687">Ribonucleoprotein</keyword>
<keyword id="KW-0689">Ribosomal protein</keyword>
<proteinExistence type="inferred from homology"/>